<proteinExistence type="inferred from homology"/>
<protein>
    <recommendedName>
        <fullName evidence="2">Formamidopyrimidine-DNA glycosylase</fullName>
        <shortName evidence="2">Fapy-DNA glycosylase</shortName>
        <ecNumber evidence="2">3.2.2.23</ecNumber>
    </recommendedName>
    <alternativeName>
        <fullName evidence="2">DNA-(apurinic or apyrimidinic site) lyase MutM</fullName>
        <shortName evidence="2">AP lyase MutM</shortName>
        <ecNumber evidence="2">4.2.99.18</ecNumber>
    </alternativeName>
</protein>
<evidence type="ECO:0000250" key="1"/>
<evidence type="ECO:0000255" key="2">
    <source>
        <dbReference type="HAMAP-Rule" id="MF_00103"/>
    </source>
</evidence>
<reference key="1">
    <citation type="journal article" date="2001" name="Nature">
        <title>Complete genome sequence of a multiple drug resistant Salmonella enterica serovar Typhi CT18.</title>
        <authorList>
            <person name="Parkhill J."/>
            <person name="Dougan G."/>
            <person name="James K.D."/>
            <person name="Thomson N.R."/>
            <person name="Pickard D."/>
            <person name="Wain J."/>
            <person name="Churcher C.M."/>
            <person name="Mungall K.L."/>
            <person name="Bentley S.D."/>
            <person name="Holden M.T.G."/>
            <person name="Sebaihia M."/>
            <person name="Baker S."/>
            <person name="Basham D."/>
            <person name="Brooks K."/>
            <person name="Chillingworth T."/>
            <person name="Connerton P."/>
            <person name="Cronin A."/>
            <person name="Davis P."/>
            <person name="Davies R.M."/>
            <person name="Dowd L."/>
            <person name="White N."/>
            <person name="Farrar J."/>
            <person name="Feltwell T."/>
            <person name="Hamlin N."/>
            <person name="Haque A."/>
            <person name="Hien T.T."/>
            <person name="Holroyd S."/>
            <person name="Jagels K."/>
            <person name="Krogh A."/>
            <person name="Larsen T.S."/>
            <person name="Leather S."/>
            <person name="Moule S."/>
            <person name="O'Gaora P."/>
            <person name="Parry C."/>
            <person name="Quail M.A."/>
            <person name="Rutherford K.M."/>
            <person name="Simmonds M."/>
            <person name="Skelton J."/>
            <person name="Stevens K."/>
            <person name="Whitehead S."/>
            <person name="Barrell B.G."/>
        </authorList>
    </citation>
    <scope>NUCLEOTIDE SEQUENCE [LARGE SCALE GENOMIC DNA]</scope>
    <source>
        <strain>CT18</strain>
    </source>
</reference>
<reference key="2">
    <citation type="journal article" date="2003" name="J. Bacteriol.">
        <title>Comparative genomics of Salmonella enterica serovar Typhi strains Ty2 and CT18.</title>
        <authorList>
            <person name="Deng W."/>
            <person name="Liou S.-R."/>
            <person name="Plunkett G. III"/>
            <person name="Mayhew G.F."/>
            <person name="Rose D.J."/>
            <person name="Burland V."/>
            <person name="Kodoyianni V."/>
            <person name="Schwartz D.C."/>
            <person name="Blattner F.R."/>
        </authorList>
    </citation>
    <scope>NUCLEOTIDE SEQUENCE [LARGE SCALE GENOMIC DNA]</scope>
    <source>
        <strain>ATCC 700931 / Ty2</strain>
    </source>
</reference>
<dbReference type="EC" id="3.2.2.23" evidence="2"/>
<dbReference type="EC" id="4.2.99.18" evidence="2"/>
<dbReference type="EMBL" id="AL513382">
    <property type="protein sequence ID" value="CAD03267.1"/>
    <property type="molecule type" value="Genomic_DNA"/>
</dbReference>
<dbReference type="EMBL" id="AE014613">
    <property type="protein sequence ID" value="AAO71274.1"/>
    <property type="molecule type" value="Genomic_DNA"/>
</dbReference>
<dbReference type="RefSeq" id="NP_458200.1">
    <property type="nucleotide sequence ID" value="NC_003198.1"/>
</dbReference>
<dbReference type="RefSeq" id="WP_001114515.1">
    <property type="nucleotide sequence ID" value="NZ_WSUR01000001.1"/>
</dbReference>
<dbReference type="SMR" id="Q8Z2H2"/>
<dbReference type="STRING" id="220341.gene:17587911"/>
<dbReference type="KEGG" id="stt:t3792"/>
<dbReference type="KEGG" id="sty:STY4068"/>
<dbReference type="PATRIC" id="fig|220341.7.peg.4153"/>
<dbReference type="eggNOG" id="COG0266">
    <property type="taxonomic scope" value="Bacteria"/>
</dbReference>
<dbReference type="HOGENOM" id="CLU_038423_1_1_6"/>
<dbReference type="OMA" id="WMNRSSY"/>
<dbReference type="OrthoDB" id="9800855at2"/>
<dbReference type="Proteomes" id="UP000000541">
    <property type="component" value="Chromosome"/>
</dbReference>
<dbReference type="Proteomes" id="UP000002670">
    <property type="component" value="Chromosome"/>
</dbReference>
<dbReference type="GO" id="GO:0034039">
    <property type="term" value="F:8-oxo-7,8-dihydroguanine DNA N-glycosylase activity"/>
    <property type="evidence" value="ECO:0007669"/>
    <property type="project" value="TreeGrafter"/>
</dbReference>
<dbReference type="GO" id="GO:0140078">
    <property type="term" value="F:class I DNA-(apurinic or apyrimidinic site) endonuclease activity"/>
    <property type="evidence" value="ECO:0007669"/>
    <property type="project" value="UniProtKB-EC"/>
</dbReference>
<dbReference type="GO" id="GO:0003684">
    <property type="term" value="F:damaged DNA binding"/>
    <property type="evidence" value="ECO:0007669"/>
    <property type="project" value="InterPro"/>
</dbReference>
<dbReference type="GO" id="GO:0008270">
    <property type="term" value="F:zinc ion binding"/>
    <property type="evidence" value="ECO:0007669"/>
    <property type="project" value="UniProtKB-UniRule"/>
</dbReference>
<dbReference type="GO" id="GO:0006284">
    <property type="term" value="P:base-excision repair"/>
    <property type="evidence" value="ECO:0007669"/>
    <property type="project" value="InterPro"/>
</dbReference>
<dbReference type="CDD" id="cd08966">
    <property type="entry name" value="EcFpg-like_N"/>
    <property type="match status" value="1"/>
</dbReference>
<dbReference type="FunFam" id="1.10.8.50:FF:000003">
    <property type="entry name" value="Formamidopyrimidine-DNA glycosylase"/>
    <property type="match status" value="1"/>
</dbReference>
<dbReference type="FunFam" id="3.20.190.10:FF:000001">
    <property type="entry name" value="Formamidopyrimidine-DNA glycosylase"/>
    <property type="match status" value="1"/>
</dbReference>
<dbReference type="Gene3D" id="1.10.8.50">
    <property type="match status" value="1"/>
</dbReference>
<dbReference type="Gene3D" id="3.20.190.10">
    <property type="entry name" value="MutM-like, N-terminal"/>
    <property type="match status" value="1"/>
</dbReference>
<dbReference type="HAMAP" id="MF_00103">
    <property type="entry name" value="Fapy_DNA_glycosyl"/>
    <property type="match status" value="1"/>
</dbReference>
<dbReference type="InterPro" id="IPR015886">
    <property type="entry name" value="DNA_glyclase/AP_lyase_DNA-bd"/>
</dbReference>
<dbReference type="InterPro" id="IPR015887">
    <property type="entry name" value="DNA_glyclase_Znf_dom_DNA_BS"/>
</dbReference>
<dbReference type="InterPro" id="IPR020629">
    <property type="entry name" value="Formamido-pyr_DNA_Glyclase"/>
</dbReference>
<dbReference type="InterPro" id="IPR012319">
    <property type="entry name" value="FPG_cat"/>
</dbReference>
<dbReference type="InterPro" id="IPR035937">
    <property type="entry name" value="MutM-like_N-ter"/>
</dbReference>
<dbReference type="InterPro" id="IPR010979">
    <property type="entry name" value="Ribosomal_uS13-like_H2TH"/>
</dbReference>
<dbReference type="InterPro" id="IPR000214">
    <property type="entry name" value="Znf_DNA_glyclase/AP_lyase"/>
</dbReference>
<dbReference type="InterPro" id="IPR010663">
    <property type="entry name" value="Znf_FPG/IleRS"/>
</dbReference>
<dbReference type="NCBIfam" id="TIGR00577">
    <property type="entry name" value="fpg"/>
    <property type="match status" value="1"/>
</dbReference>
<dbReference type="NCBIfam" id="NF002211">
    <property type="entry name" value="PRK01103.1"/>
    <property type="match status" value="1"/>
</dbReference>
<dbReference type="PANTHER" id="PTHR22993">
    <property type="entry name" value="FORMAMIDOPYRIMIDINE-DNA GLYCOSYLASE"/>
    <property type="match status" value="1"/>
</dbReference>
<dbReference type="PANTHER" id="PTHR22993:SF9">
    <property type="entry name" value="FORMAMIDOPYRIMIDINE-DNA GLYCOSYLASE"/>
    <property type="match status" value="1"/>
</dbReference>
<dbReference type="Pfam" id="PF01149">
    <property type="entry name" value="Fapy_DNA_glyco"/>
    <property type="match status" value="1"/>
</dbReference>
<dbReference type="Pfam" id="PF06831">
    <property type="entry name" value="H2TH"/>
    <property type="match status" value="1"/>
</dbReference>
<dbReference type="Pfam" id="PF06827">
    <property type="entry name" value="zf-FPG_IleRS"/>
    <property type="match status" value="1"/>
</dbReference>
<dbReference type="SMART" id="SM00898">
    <property type="entry name" value="Fapy_DNA_glyco"/>
    <property type="match status" value="1"/>
</dbReference>
<dbReference type="SMART" id="SM01232">
    <property type="entry name" value="H2TH"/>
    <property type="match status" value="1"/>
</dbReference>
<dbReference type="SUPFAM" id="SSF57716">
    <property type="entry name" value="Glucocorticoid receptor-like (DNA-binding domain)"/>
    <property type="match status" value="1"/>
</dbReference>
<dbReference type="SUPFAM" id="SSF81624">
    <property type="entry name" value="N-terminal domain of MutM-like DNA repair proteins"/>
    <property type="match status" value="1"/>
</dbReference>
<dbReference type="SUPFAM" id="SSF46946">
    <property type="entry name" value="S13-like H2TH domain"/>
    <property type="match status" value="1"/>
</dbReference>
<dbReference type="PROSITE" id="PS51068">
    <property type="entry name" value="FPG_CAT"/>
    <property type="match status" value="1"/>
</dbReference>
<dbReference type="PROSITE" id="PS01242">
    <property type="entry name" value="ZF_FPG_1"/>
    <property type="match status" value="1"/>
</dbReference>
<dbReference type="PROSITE" id="PS51066">
    <property type="entry name" value="ZF_FPG_2"/>
    <property type="match status" value="1"/>
</dbReference>
<sequence>MPELPEVETSRRGIEPHLVGATILHAHIRNGRLRWPVSDEIYRLSDTPVLSVQRRAKYLLLELPDGWIIIHLGMSGSLRILSEALPAEKHDHVDLVMSNGKILRYTDPRRFGAWLWTKELEGHNVLAHLGPEPLSDEFNGEYLQQKCAKKKTAIKPWLMDNKLVVGVGNIYASESLFAAGIHPDRLASSLSTEECDLLARVIKAVLLRSIEQGGTTLKDFLQSDGKPGYFAQELQVYGRKGEPCRVCGTPIVATKHAQRATFYCRHCQK</sequence>
<accession>Q8Z2H2</accession>
<gene>
    <name evidence="2" type="primary">mutM</name>
    <name evidence="2" type="synonym">fpg</name>
    <name type="ordered locus">STY4068</name>
    <name type="ordered locus">t3792</name>
</gene>
<feature type="initiator methionine" description="Removed" evidence="1">
    <location>
        <position position="1"/>
    </location>
</feature>
<feature type="chain" id="PRO_0000170859" description="Formamidopyrimidine-DNA glycosylase">
    <location>
        <begin position="2"/>
        <end position="269"/>
    </location>
</feature>
<feature type="zinc finger region" description="FPG-type" evidence="2">
    <location>
        <begin position="235"/>
        <end position="269"/>
    </location>
</feature>
<feature type="active site" description="Schiff-base intermediate with DNA" evidence="2">
    <location>
        <position position="2"/>
    </location>
</feature>
<feature type="active site" description="Proton donor" evidence="2">
    <location>
        <position position="3"/>
    </location>
</feature>
<feature type="active site" description="Proton donor; for beta-elimination activity" evidence="2">
    <location>
        <position position="57"/>
    </location>
</feature>
<feature type="active site" description="Proton donor; for delta-elimination activity" evidence="2">
    <location>
        <position position="259"/>
    </location>
</feature>
<feature type="binding site" evidence="2">
    <location>
        <position position="90"/>
    </location>
    <ligand>
        <name>DNA</name>
        <dbReference type="ChEBI" id="CHEBI:16991"/>
    </ligand>
</feature>
<feature type="binding site" evidence="2">
    <location>
        <position position="109"/>
    </location>
    <ligand>
        <name>DNA</name>
        <dbReference type="ChEBI" id="CHEBI:16991"/>
    </ligand>
</feature>
<feature type="binding site" evidence="2">
    <location>
        <position position="150"/>
    </location>
    <ligand>
        <name>DNA</name>
        <dbReference type="ChEBI" id="CHEBI:16991"/>
    </ligand>
</feature>
<name>FPG_SALTI</name>
<organism>
    <name type="scientific">Salmonella typhi</name>
    <dbReference type="NCBI Taxonomy" id="90370"/>
    <lineage>
        <taxon>Bacteria</taxon>
        <taxon>Pseudomonadati</taxon>
        <taxon>Pseudomonadota</taxon>
        <taxon>Gammaproteobacteria</taxon>
        <taxon>Enterobacterales</taxon>
        <taxon>Enterobacteriaceae</taxon>
        <taxon>Salmonella</taxon>
    </lineage>
</organism>
<keyword id="KW-0227">DNA damage</keyword>
<keyword id="KW-0234">DNA repair</keyword>
<keyword id="KW-0238">DNA-binding</keyword>
<keyword id="KW-0326">Glycosidase</keyword>
<keyword id="KW-0378">Hydrolase</keyword>
<keyword id="KW-0456">Lyase</keyword>
<keyword id="KW-0479">Metal-binding</keyword>
<keyword id="KW-0511">Multifunctional enzyme</keyword>
<keyword id="KW-0862">Zinc</keyword>
<keyword id="KW-0863">Zinc-finger</keyword>
<comment type="function">
    <text evidence="2">Involved in base excision repair of DNA damaged by oxidation or by mutagenic agents. Acts as a DNA glycosylase that recognizes and removes damaged bases. Has a preference for oxidized purines, such as 7,8-dihydro-8-oxoguanine (8-oxoG). Has AP (apurinic/apyrimidinic) lyase activity and introduces nicks in the DNA strand. Cleaves the DNA backbone by beta-delta elimination to generate a single-strand break at the site of the removed base with both 3'- and 5'-phosphates.</text>
</comment>
<comment type="catalytic activity">
    <reaction evidence="2">
        <text>Hydrolysis of DNA containing ring-opened 7-methylguanine residues, releasing 2,6-diamino-4-hydroxy-5-(N-methyl)formamidopyrimidine.</text>
        <dbReference type="EC" id="3.2.2.23"/>
    </reaction>
</comment>
<comment type="catalytic activity">
    <reaction evidence="2">
        <text>2'-deoxyribonucleotide-(2'-deoxyribose 5'-phosphate)-2'-deoxyribonucleotide-DNA = a 3'-end 2'-deoxyribonucleotide-(2,3-dehydro-2,3-deoxyribose 5'-phosphate)-DNA + a 5'-end 5'-phospho-2'-deoxyribonucleoside-DNA + H(+)</text>
        <dbReference type="Rhea" id="RHEA:66592"/>
        <dbReference type="Rhea" id="RHEA-COMP:13180"/>
        <dbReference type="Rhea" id="RHEA-COMP:16897"/>
        <dbReference type="Rhea" id="RHEA-COMP:17067"/>
        <dbReference type="ChEBI" id="CHEBI:15378"/>
        <dbReference type="ChEBI" id="CHEBI:136412"/>
        <dbReference type="ChEBI" id="CHEBI:157695"/>
        <dbReference type="ChEBI" id="CHEBI:167181"/>
        <dbReference type="EC" id="4.2.99.18"/>
    </reaction>
</comment>
<comment type="cofactor">
    <cofactor evidence="2">
        <name>Zn(2+)</name>
        <dbReference type="ChEBI" id="CHEBI:29105"/>
    </cofactor>
    <text evidence="2">Binds 1 zinc ion per subunit.</text>
</comment>
<comment type="subunit">
    <text evidence="2">Monomer.</text>
</comment>
<comment type="similarity">
    <text evidence="2">Belongs to the FPG family.</text>
</comment>